<keyword id="KW-0131">Cell cycle</keyword>
<keyword id="KW-0132">Cell division</keyword>
<evidence type="ECO:0000255" key="1">
    <source>
        <dbReference type="HAMAP-Rule" id="MF_00262"/>
    </source>
</evidence>
<proteinExistence type="inferred from homology"/>
<dbReference type="EMBL" id="CP000512">
    <property type="protein sequence ID" value="ABM30738.1"/>
    <property type="molecule type" value="Genomic_DNA"/>
</dbReference>
<dbReference type="RefSeq" id="WP_011793316.1">
    <property type="nucleotide sequence ID" value="NC_008752.1"/>
</dbReference>
<dbReference type="SMR" id="A1TIF0"/>
<dbReference type="STRING" id="397945.Aave_0126"/>
<dbReference type="GeneID" id="79789928"/>
<dbReference type="KEGG" id="aav:Aave_0126"/>
<dbReference type="eggNOG" id="COG0851">
    <property type="taxonomic scope" value="Bacteria"/>
</dbReference>
<dbReference type="HOGENOM" id="CLU_137929_2_1_4"/>
<dbReference type="OrthoDB" id="9802655at2"/>
<dbReference type="Proteomes" id="UP000002596">
    <property type="component" value="Chromosome"/>
</dbReference>
<dbReference type="GO" id="GO:0051301">
    <property type="term" value="P:cell division"/>
    <property type="evidence" value="ECO:0007669"/>
    <property type="project" value="UniProtKB-KW"/>
</dbReference>
<dbReference type="GO" id="GO:0032955">
    <property type="term" value="P:regulation of division septum assembly"/>
    <property type="evidence" value="ECO:0007669"/>
    <property type="project" value="InterPro"/>
</dbReference>
<dbReference type="FunFam" id="3.30.1070.10:FF:000001">
    <property type="entry name" value="Cell division topological specificity factor"/>
    <property type="match status" value="1"/>
</dbReference>
<dbReference type="Gene3D" id="3.30.1070.10">
    <property type="entry name" value="Cell division topological specificity factor MinE"/>
    <property type="match status" value="1"/>
</dbReference>
<dbReference type="HAMAP" id="MF_00262">
    <property type="entry name" value="MinE"/>
    <property type="match status" value="1"/>
</dbReference>
<dbReference type="InterPro" id="IPR005527">
    <property type="entry name" value="MinE"/>
</dbReference>
<dbReference type="InterPro" id="IPR036707">
    <property type="entry name" value="MinE_sf"/>
</dbReference>
<dbReference type="NCBIfam" id="TIGR01215">
    <property type="entry name" value="minE"/>
    <property type="match status" value="1"/>
</dbReference>
<dbReference type="NCBIfam" id="NF001422">
    <property type="entry name" value="PRK00296.1"/>
    <property type="match status" value="1"/>
</dbReference>
<dbReference type="NCBIfam" id="NF010595">
    <property type="entry name" value="PRK13989.1"/>
    <property type="match status" value="1"/>
</dbReference>
<dbReference type="Pfam" id="PF03776">
    <property type="entry name" value="MinE"/>
    <property type="match status" value="1"/>
</dbReference>
<dbReference type="SUPFAM" id="SSF55229">
    <property type="entry name" value="Cell division protein MinE topological specificity domain"/>
    <property type="match status" value="1"/>
</dbReference>
<reference key="1">
    <citation type="submission" date="2006-12" db="EMBL/GenBank/DDBJ databases">
        <title>Complete sequence of Acidovorax avenae subsp. citrulli AAC00-1.</title>
        <authorList>
            <person name="Copeland A."/>
            <person name="Lucas S."/>
            <person name="Lapidus A."/>
            <person name="Barry K."/>
            <person name="Detter J.C."/>
            <person name="Glavina del Rio T."/>
            <person name="Dalin E."/>
            <person name="Tice H."/>
            <person name="Pitluck S."/>
            <person name="Kiss H."/>
            <person name="Brettin T."/>
            <person name="Bruce D."/>
            <person name="Han C."/>
            <person name="Tapia R."/>
            <person name="Gilna P."/>
            <person name="Schmutz J."/>
            <person name="Larimer F."/>
            <person name="Land M."/>
            <person name="Hauser L."/>
            <person name="Kyrpides N."/>
            <person name="Kim E."/>
            <person name="Stahl D."/>
            <person name="Richardson P."/>
        </authorList>
    </citation>
    <scope>NUCLEOTIDE SEQUENCE [LARGE SCALE GENOMIC DNA]</scope>
    <source>
        <strain>AAC00-1</strain>
    </source>
</reference>
<comment type="function">
    <text evidence="1">Prevents the cell division inhibition by proteins MinC and MinD at internal division sites while permitting inhibition at polar sites. This ensures cell division at the proper site by restricting the formation of a division septum at the midpoint of the long axis of the cell.</text>
</comment>
<comment type="similarity">
    <text evidence="1">Belongs to the MinE family.</text>
</comment>
<accession>A1TIF0</accession>
<sequence length="88" mass="10031">MASFLSFLLGEKKKTASVAKERLQIILAHERNGRNASEPDYLPALQRELVAVISKYVKISPEDLKVQLERQDNLEVLEVKIELPDTVR</sequence>
<feature type="chain" id="PRO_0000298061" description="Cell division topological specificity factor">
    <location>
        <begin position="1"/>
        <end position="88"/>
    </location>
</feature>
<name>MINE_PARC0</name>
<organism>
    <name type="scientific">Paracidovorax citrulli (strain AAC00-1)</name>
    <name type="common">Acidovorax citrulli</name>
    <dbReference type="NCBI Taxonomy" id="397945"/>
    <lineage>
        <taxon>Bacteria</taxon>
        <taxon>Pseudomonadati</taxon>
        <taxon>Pseudomonadota</taxon>
        <taxon>Betaproteobacteria</taxon>
        <taxon>Burkholderiales</taxon>
        <taxon>Comamonadaceae</taxon>
        <taxon>Paracidovorax</taxon>
    </lineage>
</organism>
<protein>
    <recommendedName>
        <fullName evidence="1">Cell division topological specificity factor</fullName>
    </recommendedName>
</protein>
<gene>
    <name evidence="1" type="primary">minE</name>
    <name type="ordered locus">Aave_0126</name>
</gene>